<proteinExistence type="evidence at protein level"/>
<reference key="1">
    <citation type="journal article" date="1983" name="Nature">
        <title>Deduced amino acid sequence from the bovine oxytocin-neurophysin I precursor cDNA.</title>
        <authorList>
            <person name="Land H."/>
            <person name="Grez M."/>
            <person name="Ruppert S."/>
            <person name="Schmale H."/>
            <person name="Rehbein M."/>
            <person name="Richter D."/>
            <person name="Schuetz G."/>
        </authorList>
    </citation>
    <scope>NUCLEOTIDE SEQUENCE [MRNA]</scope>
</reference>
<reference key="2">
    <citation type="journal article" date="1984" name="Nature">
        <title>Recent gene conversion involving bovine vasopressin and oxytocin precursor genes suggested by nucleotide sequence.</title>
        <authorList>
            <person name="Ruppert S."/>
            <person name="Scherer G."/>
            <person name="Schuetz G."/>
        </authorList>
    </citation>
    <scope>NUCLEOTIDE SEQUENCE [GENOMIC DNA]</scope>
</reference>
<reference key="3">
    <citation type="journal article" date="1986" name="Biol. Chem. Hoppe-Seyler">
        <title>The neurohypophyseal hormones vasopressin and oxytocin. Precursor structure, synthesis and regulation.</title>
        <authorList>
            <person name="Rehbein M."/>
            <person name="Hillers M."/>
            <person name="Mohr E."/>
            <person name="Ivell R."/>
            <person name="Morley S."/>
            <person name="Schmale H."/>
            <person name="Richter D."/>
        </authorList>
    </citation>
    <scope>NUCLEOTIDE SEQUENCE [MRNA]</scope>
</reference>
<reference key="4">
    <citation type="submission" date="2007-06" db="EMBL/GenBank/DDBJ databases">
        <authorList>
            <consortium name="NIH - Mammalian Gene Collection (MGC) project"/>
        </authorList>
    </citation>
    <scope>NUCLEOTIDE SEQUENCE [LARGE SCALE MRNA]</scope>
    <source>
        <strain>Hereford</strain>
        <tissue>Hypothalamus</tissue>
    </source>
</reference>
<reference key="5">
    <citation type="journal article" date="1984" name="EMBO J.">
        <title>The gene for the hypothalamic peptide hormone oxytocin is highly expressed in the bovine corpus luteum: biosynthesis, structure and sequence analysis.</title>
        <authorList>
            <person name="Ivell R."/>
            <person name="Richter D."/>
        </authorList>
    </citation>
    <scope>NUCLEOTIDE SEQUENCE [MRNA] OF 15-125</scope>
</reference>
<reference key="6">
    <citation type="journal article" date="1953" name="J. Biol. Chem.">
        <title>The sequence of amino acids in oxytocin, with a proposal for the structure of oxytocin.</title>
        <authorList>
            <person name="du Vigneaud V."/>
            <person name="Ressler C."/>
            <person name="Trippett S."/>
        </authorList>
    </citation>
    <scope>PROTEIN SEQUENCE OF 20-28</scope>
    <scope>DISULFIDE BONDS</scope>
    <scope>AMIDATION AT GLY-28</scope>
</reference>
<reference key="7">
    <citation type="journal article" date="1953" name="Monatsh. Chem.">
        <title>About the chemical structure of oxytocin.</title>
        <authorList>
            <person name="Tuppy H."/>
            <person name="Michl H."/>
        </authorList>
    </citation>
    <scope>PROTEIN SEQUENCE OF 20-28</scope>
</reference>
<reference key="8">
    <citation type="journal article" date="1978" name="J. Biol. Chem.">
        <title>Complete amino acid sequence of bovine neurophysin-I. A major secretory product of the posterior pituitary.</title>
        <authorList>
            <person name="Schlesinger D.H."/>
            <person name="Audhya T.K."/>
            <person name="Walter R."/>
        </authorList>
    </citation>
    <scope>PROTEIN SEQUENCE OF 32-124</scope>
</reference>
<reference key="9">
    <citation type="journal article" date="1979" name="FEBS Lett.">
        <title>Comparison between MSEL- and VLDV-neurophysins. Complete amino acid sequences of porcine and bovine VLDV-neurophysins.</title>
        <authorList>
            <person name="Chauvet M.-T."/>
            <person name="Codogno P."/>
            <person name="Chauvet J."/>
            <person name="Acher R."/>
        </authorList>
    </citation>
    <scope>PROTEIN SEQUENCE OF 32-124</scope>
</reference>
<reference key="10">
    <citation type="journal article" date="1989" name="Proc. Natl. Acad. Sci. U.S.A.">
        <title>Complete assignment of neurophysin disulfides indicates pairing in two separate domains.</title>
        <authorList>
            <person name="Burman S."/>
            <person name="Wellner D."/>
            <person name="Chait B."/>
            <person name="Chaudhary T."/>
            <person name="Breslow E."/>
        </authorList>
    </citation>
    <scope>DISULFIDE BONDS</scope>
</reference>
<reference evidence="9 10" key="11">
    <citation type="journal article" date="1986" name="Science">
        <title>Crystal structure analysis of deamino-oxytocin: conformational flexibility and receptor binding.</title>
        <authorList>
            <person name="Wood S.P."/>
            <person name="Tickle I.J."/>
            <person name="Treharne A.M."/>
            <person name="Pitts J.E."/>
            <person name="Mascarenhas Y."/>
            <person name="Li J.Y."/>
            <person name="Husain J."/>
            <person name="Cooper S."/>
            <person name="Blundell T.L."/>
            <person name="Hruby V.J."/>
        </authorList>
    </citation>
    <scope>X-RAY CRYSTALLOGRAPHY (1.04 ANGSTROMS) OF OXYTOCIN</scope>
    <scope>DISULFIDE BOND</scope>
    <scope>AMIDATION AT GLY-28</scope>
</reference>
<keyword id="KW-0002">3D-structure</keyword>
<keyword id="KW-0027">Amidation</keyword>
<keyword id="KW-0165">Cleavage on pair of basic residues</keyword>
<keyword id="KW-0903">Direct protein sequencing</keyword>
<keyword id="KW-1015">Disulfide bond</keyword>
<keyword id="KW-0372">Hormone</keyword>
<keyword id="KW-1185">Reference proteome</keyword>
<keyword id="KW-0964">Secreted</keyword>
<keyword id="KW-0732">Signal</keyword>
<gene>
    <name type="primary">OXT</name>
</gene>
<evidence type="ECO:0000250" key="1">
    <source>
        <dbReference type="UniProtKB" id="P01178"/>
    </source>
</evidence>
<evidence type="ECO:0000269" key="2">
    <source>
    </source>
</evidence>
<evidence type="ECO:0000269" key="3">
    <source>
    </source>
</evidence>
<evidence type="ECO:0000269" key="4">
    <source>
    </source>
</evidence>
<evidence type="ECO:0000269" key="5">
    <source ref="7"/>
</evidence>
<evidence type="ECO:0000305" key="6"/>
<evidence type="ECO:0007744" key="7">
    <source>
        <dbReference type="PDB" id="1L5C"/>
    </source>
</evidence>
<evidence type="ECO:0007744" key="8">
    <source>
        <dbReference type="PDB" id="1L5D"/>
    </source>
</evidence>
<evidence type="ECO:0007744" key="9">
    <source>
        <dbReference type="PDB" id="1XY1"/>
    </source>
</evidence>
<evidence type="ECO:0007744" key="10">
    <source>
        <dbReference type="PDB" id="1XY2"/>
    </source>
</evidence>
<evidence type="ECO:0007744" key="11">
    <source>
        <dbReference type="PDB" id="2HNU"/>
    </source>
</evidence>
<evidence type="ECO:0007744" key="12">
    <source>
        <dbReference type="PDB" id="2HNV"/>
    </source>
</evidence>
<evidence type="ECO:0007744" key="13">
    <source>
        <dbReference type="PDB" id="2HNW"/>
    </source>
</evidence>
<evidence type="ECO:0007744" key="14">
    <source>
        <dbReference type="PDB" id="2LBN"/>
    </source>
</evidence>
<evidence type="ECO:0007829" key="15">
    <source>
        <dbReference type="PDB" id="1L5C"/>
    </source>
</evidence>
<evidence type="ECO:0007829" key="16">
    <source>
        <dbReference type="PDB" id="1L5D"/>
    </source>
</evidence>
<evidence type="ECO:0007829" key="17">
    <source>
        <dbReference type="PDB" id="2HNU"/>
    </source>
</evidence>
<name>NEU1_BOVIN</name>
<feature type="signal peptide" evidence="2 5">
    <location>
        <begin position="1"/>
        <end position="19"/>
    </location>
</feature>
<feature type="peptide" id="PRO_0000020491" description="Oxytocin">
    <location>
        <begin position="20"/>
        <end position="28"/>
    </location>
</feature>
<feature type="chain" id="PRO_0000020492" description="Neurophysin 1">
    <location>
        <begin position="32"/>
        <end position="125"/>
    </location>
</feature>
<feature type="modified residue" description="Glycine amide" evidence="2 4">
    <location>
        <position position="28"/>
    </location>
</feature>
<feature type="disulfide bond" evidence="3 4">
    <location>
        <begin position="20"/>
        <end position="25"/>
    </location>
</feature>
<feature type="disulfide bond" evidence="7 8 11 12 13 14">
    <location>
        <begin position="41"/>
        <end position="85"/>
    </location>
</feature>
<feature type="disulfide bond" evidence="7 8 11 12 13 14">
    <location>
        <begin position="44"/>
        <end position="58"/>
    </location>
</feature>
<feature type="disulfide bond" evidence="7 8 11 12 13 14">
    <location>
        <begin position="52"/>
        <end position="75"/>
    </location>
</feature>
<feature type="disulfide bond" evidence="7 8 11 12 13 14">
    <location>
        <begin position="59"/>
        <end position="65"/>
    </location>
</feature>
<feature type="disulfide bond" evidence="7 8 11 12 13 14">
    <location>
        <begin position="92"/>
        <end position="104"/>
    </location>
</feature>
<feature type="disulfide bond" evidence="7 8 11 12 13 14">
    <location>
        <begin position="98"/>
        <end position="116"/>
    </location>
</feature>
<feature type="disulfide bond" evidence="7 8 11 12 13 14">
    <location>
        <begin position="105"/>
        <end position="110"/>
    </location>
</feature>
<feature type="sequence conflict" description="In Ref. 9; AA sequence." evidence="6" ref="9">
    <original>Q</original>
    <variation>L</variation>
    <location>
        <position position="124"/>
    </location>
</feature>
<feature type="strand" evidence="15">
    <location>
        <begin position="36"/>
        <end position="38"/>
    </location>
</feature>
<feature type="strand" evidence="17">
    <location>
        <begin position="43"/>
        <end position="45"/>
    </location>
</feature>
<feature type="helix" evidence="17">
    <location>
        <begin position="46"/>
        <end position="48"/>
    </location>
</feature>
<feature type="strand" evidence="17">
    <location>
        <begin position="50"/>
        <end position="54"/>
    </location>
</feature>
<feature type="strand" evidence="17">
    <location>
        <begin position="57"/>
        <end position="60"/>
    </location>
</feature>
<feature type="turn" evidence="17">
    <location>
        <begin position="61"/>
        <end position="63"/>
    </location>
</feature>
<feature type="strand" evidence="17">
    <location>
        <begin position="64"/>
        <end position="69"/>
    </location>
</feature>
<feature type="helix" evidence="17">
    <location>
        <begin position="70"/>
        <end position="80"/>
    </location>
</feature>
<feature type="strand" evidence="17">
    <location>
        <begin position="89"/>
        <end position="92"/>
    </location>
</feature>
<feature type="turn" evidence="17">
    <location>
        <begin position="93"/>
        <end position="95"/>
    </location>
</feature>
<feature type="strand" evidence="17">
    <location>
        <begin position="96"/>
        <end position="100"/>
    </location>
</feature>
<feature type="strand" evidence="17">
    <location>
        <begin position="103"/>
        <end position="106"/>
    </location>
</feature>
<feature type="strand" evidence="17">
    <location>
        <begin position="109"/>
        <end position="112"/>
    </location>
</feature>
<feature type="helix" evidence="17">
    <location>
        <begin position="114"/>
        <end position="116"/>
    </location>
</feature>
<feature type="strand" evidence="16">
    <location>
        <begin position="117"/>
        <end position="121"/>
    </location>
</feature>
<dbReference type="EMBL" id="X00502">
    <property type="protein sequence ID" value="CAA25194.1"/>
    <property type="status" value="ALT_SEQ"/>
    <property type="molecule type" value="Genomic_DNA"/>
</dbReference>
<dbReference type="EMBL" id="M25648">
    <property type="protein sequence ID" value="AAA30680.1"/>
    <property type="molecule type" value="mRNA"/>
</dbReference>
<dbReference type="EMBL" id="BC141997">
    <property type="protein sequence ID" value="AAI41998.1"/>
    <property type="molecule type" value="mRNA"/>
</dbReference>
<dbReference type="EMBL" id="V00114">
    <property type="protein sequence ID" value="CAA23448.1"/>
    <property type="molecule type" value="mRNA"/>
</dbReference>
<dbReference type="EMBL" id="V00114">
    <property type="protein sequence ID" value="CAA23450.1"/>
    <property type="status" value="ALT_INIT"/>
    <property type="molecule type" value="mRNA"/>
</dbReference>
<dbReference type="EMBL" id="V00114">
    <property type="protein sequence ID" value="CAA23449.1"/>
    <property type="status" value="ALT_SEQ"/>
    <property type="molecule type" value="mRNA"/>
</dbReference>
<dbReference type="EMBL" id="X00950">
    <property type="protein sequence ID" value="CAA25462.1"/>
    <property type="molecule type" value="mRNA"/>
</dbReference>
<dbReference type="PIR" id="S07332">
    <property type="entry name" value="NFBO1"/>
</dbReference>
<dbReference type="RefSeq" id="NP_789825.1">
    <property type="nucleotide sequence ID" value="NM_176855.1"/>
</dbReference>
<dbReference type="PDB" id="1L5C">
    <property type="method" value="NMR"/>
    <property type="chains" value="A=32-123"/>
</dbReference>
<dbReference type="PDB" id="1L5D">
    <property type="method" value="NMR"/>
    <property type="chains" value="A=32-123"/>
</dbReference>
<dbReference type="PDB" id="1XY1">
    <property type="method" value="X-ray"/>
    <property type="resolution" value="1.04 A"/>
    <property type="chains" value="A/B=21-28"/>
</dbReference>
<dbReference type="PDB" id="1XY2">
    <property type="method" value="X-ray"/>
    <property type="resolution" value="1.20 A"/>
    <property type="chains" value="A=21-28"/>
</dbReference>
<dbReference type="PDB" id="2HNU">
    <property type="method" value="X-ray"/>
    <property type="resolution" value="2.00 A"/>
    <property type="chains" value="A/B/C/D/E=38-118"/>
</dbReference>
<dbReference type="PDB" id="2HNV">
    <property type="method" value="X-ray"/>
    <property type="resolution" value="2.50 A"/>
    <property type="chains" value="A/B/C/D/E=38-118"/>
</dbReference>
<dbReference type="PDB" id="2HNW">
    <property type="method" value="X-ray"/>
    <property type="resolution" value="2.90 A"/>
    <property type="chains" value="A/B/C/D/E=38-117"/>
</dbReference>
<dbReference type="PDB" id="2LBH">
    <property type="method" value="NMR"/>
    <property type="chains" value="A/B=32-123"/>
</dbReference>
<dbReference type="PDB" id="2LBN">
    <property type="method" value="NMR"/>
    <property type="chains" value="A=32-123"/>
</dbReference>
<dbReference type="PDBsum" id="1L5C"/>
<dbReference type="PDBsum" id="1L5D"/>
<dbReference type="PDBsum" id="1XY1"/>
<dbReference type="PDBsum" id="1XY2"/>
<dbReference type="PDBsum" id="2HNU"/>
<dbReference type="PDBsum" id="2HNV"/>
<dbReference type="PDBsum" id="2HNW"/>
<dbReference type="PDBsum" id="2LBH"/>
<dbReference type="PDBsum" id="2LBN"/>
<dbReference type="BMRB" id="P01175"/>
<dbReference type="SMR" id="P01175"/>
<dbReference type="FunCoup" id="P01175">
    <property type="interactions" value="273"/>
</dbReference>
<dbReference type="STRING" id="9913.ENSBTAP00000010554"/>
<dbReference type="PaxDb" id="9913-ENSBTAP00000010554"/>
<dbReference type="Ensembl" id="ENSBTAT00000010554.3">
    <property type="protein sequence ID" value="ENSBTAP00000010554.2"/>
    <property type="gene ID" value="ENSBTAG00000008026.3"/>
</dbReference>
<dbReference type="GeneID" id="280888"/>
<dbReference type="KEGG" id="bta:280888"/>
<dbReference type="CTD" id="5020"/>
<dbReference type="VEuPathDB" id="HostDB:ENSBTAG00000008026"/>
<dbReference type="VGNC" id="VGNC:32515">
    <property type="gene designation" value="OXT"/>
</dbReference>
<dbReference type="eggNOG" id="ENOG502S2CT">
    <property type="taxonomic scope" value="Eukaryota"/>
</dbReference>
<dbReference type="GeneTree" id="ENSGT00390000004511"/>
<dbReference type="HOGENOM" id="CLU_125770_1_0_1"/>
<dbReference type="InParanoid" id="P01175"/>
<dbReference type="OMA" id="ACVINDP"/>
<dbReference type="OrthoDB" id="10056056at2759"/>
<dbReference type="TreeFam" id="TF333018"/>
<dbReference type="Reactome" id="R-BTA-388479">
    <property type="pathway name" value="Vasopressin-like receptors"/>
</dbReference>
<dbReference type="Reactome" id="R-BTA-416476">
    <property type="pathway name" value="G alpha (q) signalling events"/>
</dbReference>
<dbReference type="EvolutionaryTrace" id="P01175"/>
<dbReference type="Proteomes" id="UP000009136">
    <property type="component" value="Chromosome 13"/>
</dbReference>
<dbReference type="Bgee" id="ENSBTAG00000008026">
    <property type="expression patterns" value="Expressed in diaphragm and 50 other cell types or tissues"/>
</dbReference>
<dbReference type="GO" id="GO:0005615">
    <property type="term" value="C:extracellular space"/>
    <property type="evidence" value="ECO:0000318"/>
    <property type="project" value="GO_Central"/>
</dbReference>
<dbReference type="GO" id="GO:0030141">
    <property type="term" value="C:secretory granule"/>
    <property type="evidence" value="ECO:0000318"/>
    <property type="project" value="GO_Central"/>
</dbReference>
<dbReference type="GO" id="GO:0005185">
    <property type="term" value="F:neurohypophyseal hormone activity"/>
    <property type="evidence" value="ECO:0007669"/>
    <property type="project" value="InterPro"/>
</dbReference>
<dbReference type="GO" id="GO:0005184">
    <property type="term" value="F:neuropeptide hormone activity"/>
    <property type="evidence" value="ECO:0000318"/>
    <property type="project" value="GO_Central"/>
</dbReference>
<dbReference type="GO" id="GO:0031855">
    <property type="term" value="F:oxytocin receptor binding"/>
    <property type="evidence" value="ECO:0000318"/>
    <property type="project" value="GO_Central"/>
</dbReference>
<dbReference type="GO" id="GO:0031894">
    <property type="term" value="F:V1A vasopressin receptor binding"/>
    <property type="evidence" value="ECO:0000318"/>
    <property type="project" value="GO_Central"/>
</dbReference>
<dbReference type="GO" id="GO:0043627">
    <property type="term" value="P:response to estrogen"/>
    <property type="evidence" value="ECO:0000314"/>
    <property type="project" value="CACAO"/>
</dbReference>
<dbReference type="FunFam" id="2.60.9.10:FF:000001">
    <property type="entry name" value="oxytocin-neurophysin 1"/>
    <property type="match status" value="1"/>
</dbReference>
<dbReference type="Gene3D" id="2.60.9.10">
    <property type="entry name" value="Neurohypophysial hormone domain"/>
    <property type="match status" value="1"/>
</dbReference>
<dbReference type="InterPro" id="IPR000981">
    <property type="entry name" value="Neurhyp_horm"/>
</dbReference>
<dbReference type="InterPro" id="IPR036387">
    <property type="entry name" value="Neurhyp_horm_dom_sf"/>
</dbReference>
<dbReference type="InterPro" id="IPR022423">
    <property type="entry name" value="Neurohypophysial_hormone_CS"/>
</dbReference>
<dbReference type="PANTHER" id="PTHR11681">
    <property type="entry name" value="NEUROPHYSIN"/>
    <property type="match status" value="1"/>
</dbReference>
<dbReference type="PANTHER" id="PTHR11681:SF2">
    <property type="entry name" value="OXYTOCIN-NEUROPHYSIN 1"/>
    <property type="match status" value="1"/>
</dbReference>
<dbReference type="Pfam" id="PF00220">
    <property type="entry name" value="Hormone_4"/>
    <property type="match status" value="1"/>
</dbReference>
<dbReference type="Pfam" id="PF00184">
    <property type="entry name" value="Hormone_5"/>
    <property type="match status" value="1"/>
</dbReference>
<dbReference type="PIRSF" id="PIRSF001815">
    <property type="entry name" value="Nonapeptide_hormone_precursor"/>
    <property type="match status" value="1"/>
</dbReference>
<dbReference type="PRINTS" id="PR00831">
    <property type="entry name" value="NEUROPHYSIN"/>
</dbReference>
<dbReference type="SMART" id="SM00003">
    <property type="entry name" value="NH"/>
    <property type="match status" value="1"/>
</dbReference>
<dbReference type="SUPFAM" id="SSF49606">
    <property type="entry name" value="Neurophysin II"/>
    <property type="match status" value="1"/>
</dbReference>
<dbReference type="PROSITE" id="PS00264">
    <property type="entry name" value="NEUROHYPOPHYS_HORM"/>
    <property type="match status" value="1"/>
</dbReference>
<organism>
    <name type="scientific">Bos taurus</name>
    <name type="common">Bovine</name>
    <dbReference type="NCBI Taxonomy" id="9913"/>
    <lineage>
        <taxon>Eukaryota</taxon>
        <taxon>Metazoa</taxon>
        <taxon>Chordata</taxon>
        <taxon>Craniata</taxon>
        <taxon>Vertebrata</taxon>
        <taxon>Euteleostomi</taxon>
        <taxon>Mammalia</taxon>
        <taxon>Eutheria</taxon>
        <taxon>Laurasiatheria</taxon>
        <taxon>Artiodactyla</taxon>
        <taxon>Ruminantia</taxon>
        <taxon>Pecora</taxon>
        <taxon>Bovidae</taxon>
        <taxon>Bovinae</taxon>
        <taxon>Bos</taxon>
    </lineage>
</organism>
<sequence>MAGSSLACCLLGLLALTSACYIQNCPLGGKRAVLDLDVRTCLPCGPGGKGRCFGPSICCGDELGCFVGTAEALRCQEENYLPSPCQSGQKPCGSGGRCAAAGICCSPDGCHEDPACDPEAAFSQH</sequence>
<accession>P01175</accession>
<accession>A5PJ78</accession>
<accession>P01188</accession>
<protein>
    <recommendedName>
        <fullName>Oxytocin-neurophysin 1</fullName>
        <shortName>OT-NPI</shortName>
    </recommendedName>
    <component>
        <recommendedName>
            <fullName>Oxytocin</fullName>
        </recommendedName>
        <alternativeName>
            <fullName>Ocytocin</fullName>
        </alternativeName>
    </component>
    <component>
        <recommendedName>
            <fullName>Neurophysin 1</fullName>
        </recommendedName>
    </component>
</protein>
<comment type="function">
    <text>Neurophysin 1 specifically binds oxytocin.</text>
</comment>
<comment type="function">
    <text evidence="1">Oxytocin causes contraction of the smooth muscle of the uterus and of the mammary gland. Acts by binding to oxytocin receptor (OXTR) (By similarity).</text>
</comment>
<comment type="subunit">
    <text evidence="1">Interacts with oxytocin receptor (Ki=1.5 nM) (By similarity). Interacts with vasopressin V1aR/AVPR1A (Ki=37 nM), V1bR/AVPR1B (Ki=222 nM), and V2R/AVPR2 receptors (Ki=823 nM) (By similarity).</text>
</comment>
<comment type="subcellular location">
    <subcellularLocation>
        <location>Secreted</location>
    </subcellularLocation>
</comment>
<comment type="similarity">
    <text evidence="6">Belongs to the vasopressin/oxytocin family.</text>
</comment>
<comment type="sequence caution" evidence="6">
    <conflict type="erroneous initiation">
        <sequence resource="EMBL-CDS" id="CAA23450"/>
    </conflict>
</comment>
<comment type="sequence caution" evidence="6">
    <conflict type="erroneous gene model prediction">
        <sequence resource="EMBL-CDS" id="CAA25194"/>
    </conflict>
</comment>